<feature type="chain" id="PRO_0000071944" description="Endocytosis protein end4">
    <location>
        <begin position="1"/>
        <end position="1102"/>
    </location>
</feature>
<feature type="domain" description="ENTH" evidence="2">
    <location>
        <begin position="9"/>
        <end position="139"/>
    </location>
</feature>
<feature type="domain" description="I/LWEQ" evidence="3">
    <location>
        <begin position="858"/>
        <end position="1100"/>
    </location>
</feature>
<feature type="region of interest" description="Disordered" evidence="4">
    <location>
        <begin position="265"/>
        <end position="334"/>
    </location>
</feature>
<feature type="coiled-coil region" evidence="1">
    <location>
        <begin position="338"/>
        <end position="661"/>
    </location>
</feature>
<feature type="compositionally biased region" description="Polar residues" evidence="4">
    <location>
        <begin position="292"/>
        <end position="305"/>
    </location>
</feature>
<keyword id="KW-0009">Actin-binding</keyword>
<keyword id="KW-0175">Coiled coil</keyword>
<keyword id="KW-0963">Cytoplasm</keyword>
<keyword id="KW-0206">Cytoskeleton</keyword>
<keyword id="KW-0254">Endocytosis</keyword>
<keyword id="KW-1185">Reference proteome</keyword>
<name>SLA2_SCHPO</name>
<comment type="function">
    <text evidence="5 6">Required for cellular morphogenesis and polarization of the cortical cytoskeleton. Required for establishment of new polarized growth zones where it acts in actin organization. Involved plasma membrane internalization and is essential for fluid-phase endocytosis.</text>
</comment>
<comment type="subcellular location">
    <subcellularLocation>
        <location evidence="6">Cytoplasm</location>
        <location evidence="6">Cytoskeleton</location>
    </subcellularLocation>
    <text>Localizes at cell ends during interphase and to the medial ring at cell division.</text>
</comment>
<comment type="similarity">
    <text evidence="7">Belongs to the SLA2 family.</text>
</comment>
<organism>
    <name type="scientific">Schizosaccharomyces pombe (strain 972 / ATCC 24843)</name>
    <name type="common">Fission yeast</name>
    <dbReference type="NCBI Taxonomy" id="284812"/>
    <lineage>
        <taxon>Eukaryota</taxon>
        <taxon>Fungi</taxon>
        <taxon>Dikarya</taxon>
        <taxon>Ascomycota</taxon>
        <taxon>Taphrinomycotina</taxon>
        <taxon>Schizosaccharomycetes</taxon>
        <taxon>Schizosaccharomycetales</taxon>
        <taxon>Schizosaccharomycetaceae</taxon>
        <taxon>Schizosaccharomyces</taxon>
    </lineage>
</organism>
<reference key="1">
    <citation type="journal article" date="2002" name="Nature">
        <title>The genome sequence of Schizosaccharomyces pombe.</title>
        <authorList>
            <person name="Wood V."/>
            <person name="Gwilliam R."/>
            <person name="Rajandream M.A."/>
            <person name="Lyne M.H."/>
            <person name="Lyne R."/>
            <person name="Stewart A."/>
            <person name="Sgouros J.G."/>
            <person name="Peat N."/>
            <person name="Hayles J."/>
            <person name="Baker S.G."/>
            <person name="Basham D."/>
            <person name="Bowman S."/>
            <person name="Brooks K."/>
            <person name="Brown D."/>
            <person name="Brown S."/>
            <person name="Chillingworth T."/>
            <person name="Churcher C.M."/>
            <person name="Collins M."/>
            <person name="Connor R."/>
            <person name="Cronin A."/>
            <person name="Davis P."/>
            <person name="Feltwell T."/>
            <person name="Fraser A."/>
            <person name="Gentles S."/>
            <person name="Goble A."/>
            <person name="Hamlin N."/>
            <person name="Harris D.E."/>
            <person name="Hidalgo J."/>
            <person name="Hodgson G."/>
            <person name="Holroyd S."/>
            <person name="Hornsby T."/>
            <person name="Howarth S."/>
            <person name="Huckle E.J."/>
            <person name="Hunt S."/>
            <person name="Jagels K."/>
            <person name="James K.D."/>
            <person name="Jones L."/>
            <person name="Jones M."/>
            <person name="Leather S."/>
            <person name="McDonald S."/>
            <person name="McLean J."/>
            <person name="Mooney P."/>
            <person name="Moule S."/>
            <person name="Mungall K.L."/>
            <person name="Murphy L.D."/>
            <person name="Niblett D."/>
            <person name="Odell C."/>
            <person name="Oliver K."/>
            <person name="O'Neil S."/>
            <person name="Pearson D."/>
            <person name="Quail M.A."/>
            <person name="Rabbinowitsch E."/>
            <person name="Rutherford K.M."/>
            <person name="Rutter S."/>
            <person name="Saunders D."/>
            <person name="Seeger K."/>
            <person name="Sharp S."/>
            <person name="Skelton J."/>
            <person name="Simmonds M.N."/>
            <person name="Squares R."/>
            <person name="Squares S."/>
            <person name="Stevens K."/>
            <person name="Taylor K."/>
            <person name="Taylor R.G."/>
            <person name="Tivey A."/>
            <person name="Walsh S.V."/>
            <person name="Warren T."/>
            <person name="Whitehead S."/>
            <person name="Woodward J.R."/>
            <person name="Volckaert G."/>
            <person name="Aert R."/>
            <person name="Robben J."/>
            <person name="Grymonprez B."/>
            <person name="Weltjens I."/>
            <person name="Vanstreels E."/>
            <person name="Rieger M."/>
            <person name="Schaefer M."/>
            <person name="Mueller-Auer S."/>
            <person name="Gabel C."/>
            <person name="Fuchs M."/>
            <person name="Duesterhoeft A."/>
            <person name="Fritzc C."/>
            <person name="Holzer E."/>
            <person name="Moestl D."/>
            <person name="Hilbert H."/>
            <person name="Borzym K."/>
            <person name="Langer I."/>
            <person name="Beck A."/>
            <person name="Lehrach H."/>
            <person name="Reinhardt R."/>
            <person name="Pohl T.M."/>
            <person name="Eger P."/>
            <person name="Zimmermann W."/>
            <person name="Wedler H."/>
            <person name="Wambutt R."/>
            <person name="Purnelle B."/>
            <person name="Goffeau A."/>
            <person name="Cadieu E."/>
            <person name="Dreano S."/>
            <person name="Gloux S."/>
            <person name="Lelaure V."/>
            <person name="Mottier S."/>
            <person name="Galibert F."/>
            <person name="Aves S.J."/>
            <person name="Xiang Z."/>
            <person name="Hunt C."/>
            <person name="Moore K."/>
            <person name="Hurst S.M."/>
            <person name="Lucas M."/>
            <person name="Rochet M."/>
            <person name="Gaillardin C."/>
            <person name="Tallada V.A."/>
            <person name="Garzon A."/>
            <person name="Thode G."/>
            <person name="Daga R.R."/>
            <person name="Cruzado L."/>
            <person name="Jimenez J."/>
            <person name="Sanchez M."/>
            <person name="del Rey F."/>
            <person name="Benito J."/>
            <person name="Dominguez A."/>
            <person name="Revuelta J.L."/>
            <person name="Moreno S."/>
            <person name="Armstrong J."/>
            <person name="Forsburg S.L."/>
            <person name="Cerutti L."/>
            <person name="Lowe T."/>
            <person name="McCombie W.R."/>
            <person name="Paulsen I."/>
            <person name="Potashkin J."/>
            <person name="Shpakovski G.V."/>
            <person name="Ussery D."/>
            <person name="Barrell B.G."/>
            <person name="Nurse P."/>
        </authorList>
    </citation>
    <scope>NUCLEOTIDE SEQUENCE [LARGE SCALE GENOMIC DNA]</scope>
    <source>
        <strain>972 / ATCC 24843</strain>
    </source>
</reference>
<reference key="2">
    <citation type="journal article" date="2011" name="Science">
        <title>Comparative functional genomics of the fission yeasts.</title>
        <authorList>
            <person name="Rhind N."/>
            <person name="Chen Z."/>
            <person name="Yassour M."/>
            <person name="Thompson D.A."/>
            <person name="Haas B.J."/>
            <person name="Habib N."/>
            <person name="Wapinski I."/>
            <person name="Roy S."/>
            <person name="Lin M.F."/>
            <person name="Heiman D.I."/>
            <person name="Young S.K."/>
            <person name="Furuya K."/>
            <person name="Guo Y."/>
            <person name="Pidoux A."/>
            <person name="Chen H.M."/>
            <person name="Robbertse B."/>
            <person name="Goldberg J.M."/>
            <person name="Aoki K."/>
            <person name="Bayne E.H."/>
            <person name="Berlin A.M."/>
            <person name="Desjardins C.A."/>
            <person name="Dobbs E."/>
            <person name="Dukaj L."/>
            <person name="Fan L."/>
            <person name="FitzGerald M.G."/>
            <person name="French C."/>
            <person name="Gujja S."/>
            <person name="Hansen K."/>
            <person name="Keifenheim D."/>
            <person name="Levin J.Z."/>
            <person name="Mosher R.A."/>
            <person name="Mueller C.A."/>
            <person name="Pfiffner J."/>
            <person name="Priest M."/>
            <person name="Russ C."/>
            <person name="Smialowska A."/>
            <person name="Swoboda P."/>
            <person name="Sykes S.M."/>
            <person name="Vaughn M."/>
            <person name="Vengrova S."/>
            <person name="Yoder R."/>
            <person name="Zeng Q."/>
            <person name="Allshire R."/>
            <person name="Baulcombe D."/>
            <person name="Birren B.W."/>
            <person name="Brown W."/>
            <person name="Ekwall K."/>
            <person name="Kellis M."/>
            <person name="Leatherwood J."/>
            <person name="Levin H."/>
            <person name="Margalit H."/>
            <person name="Martienssen R."/>
            <person name="Nieduszynski C.A."/>
            <person name="Spatafora J.W."/>
            <person name="Friedman N."/>
            <person name="Dalgaard J.Z."/>
            <person name="Baumann P."/>
            <person name="Niki H."/>
            <person name="Regev A."/>
            <person name="Nusbaum C."/>
        </authorList>
    </citation>
    <scope>REVISION OF GENE MODEL</scope>
</reference>
<reference key="3">
    <citation type="journal article" date="1997" name="DNA Res.">
        <title>Identification of open reading frames in Schizosaccharomyces pombe cDNAs.</title>
        <authorList>
            <person name="Yoshioka S."/>
            <person name="Kato K."/>
            <person name="Nakai K."/>
            <person name="Okayama H."/>
            <person name="Nojima H."/>
        </authorList>
    </citation>
    <scope>NUCLEOTIDE SEQUENCE [LARGE SCALE MRNA] OF 635-1102</scope>
    <source>
        <strain>PR745</strain>
    </source>
</reference>
<reference key="4">
    <citation type="journal article" date="2004" name="Yeast">
        <title>Characterization of end4+, a gene required for endocytosis in Schizosaccharomyces pombe.</title>
        <authorList>
            <person name="Iwaki T."/>
            <person name="Tanaka N."/>
            <person name="Takagi H."/>
            <person name="Giga-Hama Y."/>
            <person name="Takegawa K."/>
        </authorList>
    </citation>
    <scope>FUNCTION</scope>
</reference>
<reference key="5">
    <citation type="journal article" date="2005" name="J. Cell Sci.">
        <title>End4/Sla2 is involved in establishment of a new growth zone in Schizosaccharomyces pombe.</title>
        <authorList>
            <person name="Castagnetti S."/>
            <person name="Behrens R."/>
            <person name="Nurse P."/>
        </authorList>
    </citation>
    <scope>FUNCTION</scope>
    <scope>SUBCELLULAR LOCATION</scope>
</reference>
<reference key="6">
    <citation type="journal article" date="2011" name="Genetics">
        <title>Augmented annotation of the Schizosaccharomyces pombe genome reveals additional genes required for growth and viability.</title>
        <authorList>
            <person name="Bitton D.A."/>
            <person name="Wood V."/>
            <person name="Scutt P.J."/>
            <person name="Grallert A."/>
            <person name="Yates T."/>
            <person name="Smith D.L."/>
            <person name="Hagan I.M."/>
            <person name="Miller C.J."/>
        </authorList>
    </citation>
    <scope>REVISION OF GENE MODEL</scope>
    <scope>IDENTIFICATION BY MASS SPECTROMETRY</scope>
</reference>
<dbReference type="EMBL" id="CU329670">
    <property type="protein sequence ID" value="CAB90777.2"/>
    <property type="molecule type" value="Genomic_DNA"/>
</dbReference>
<dbReference type="EMBL" id="D89267">
    <property type="protein sequence ID" value="BAA13928.1"/>
    <property type="molecule type" value="mRNA"/>
</dbReference>
<dbReference type="PIR" id="T43195">
    <property type="entry name" value="T43195"/>
</dbReference>
<dbReference type="RefSeq" id="NP_594069.2">
    <property type="nucleotide sequence ID" value="NM_001019493.2"/>
</dbReference>
<dbReference type="SMR" id="Q9P6L5"/>
<dbReference type="BioGRID" id="279759">
    <property type="interactions" value="19"/>
</dbReference>
<dbReference type="FunCoup" id="Q9P6L5">
    <property type="interactions" value="158"/>
</dbReference>
<dbReference type="STRING" id="284812.Q9P6L5"/>
<dbReference type="iPTMnet" id="Q9P6L5"/>
<dbReference type="PaxDb" id="4896-SPAC688.11.1"/>
<dbReference type="EnsemblFungi" id="SPAC688.11.1">
    <property type="protein sequence ID" value="SPAC688.11.1:pep"/>
    <property type="gene ID" value="SPAC688.11"/>
</dbReference>
<dbReference type="GeneID" id="2543336"/>
<dbReference type="KEGG" id="spo:2543336"/>
<dbReference type="PomBase" id="SPAC688.11">
    <property type="gene designation" value="end4"/>
</dbReference>
<dbReference type="VEuPathDB" id="FungiDB:SPAC688.11"/>
<dbReference type="eggNOG" id="KOG0980">
    <property type="taxonomic scope" value="Eukaryota"/>
</dbReference>
<dbReference type="HOGENOM" id="CLU_004601_0_0_1"/>
<dbReference type="InParanoid" id="Q9P6L5"/>
<dbReference type="OMA" id="FQMSVEM"/>
<dbReference type="Reactome" id="R-SPO-8856828">
    <property type="pathway name" value="Clathrin-mediated endocytosis"/>
</dbReference>
<dbReference type="PRO" id="PR:Q9P6L5"/>
<dbReference type="Proteomes" id="UP000002485">
    <property type="component" value="Chromosome I"/>
</dbReference>
<dbReference type="GO" id="GO:0030479">
    <property type="term" value="C:actin cortical patch"/>
    <property type="evidence" value="ECO:0000314"/>
    <property type="project" value="PomBase"/>
</dbReference>
<dbReference type="GO" id="GO:0051285">
    <property type="term" value="C:cell cortex of cell tip"/>
    <property type="evidence" value="ECO:0000314"/>
    <property type="project" value="PomBase"/>
</dbReference>
<dbReference type="GO" id="GO:0032153">
    <property type="term" value="C:cell division site"/>
    <property type="evidence" value="ECO:0000314"/>
    <property type="project" value="PomBase"/>
</dbReference>
<dbReference type="GO" id="GO:0030136">
    <property type="term" value="C:clathrin-coated vesicle"/>
    <property type="evidence" value="ECO:0000318"/>
    <property type="project" value="GO_Central"/>
</dbReference>
<dbReference type="GO" id="GO:0030864">
    <property type="term" value="C:cortical actin cytoskeleton"/>
    <property type="evidence" value="ECO:0000318"/>
    <property type="project" value="GO_Central"/>
</dbReference>
<dbReference type="GO" id="GO:0005737">
    <property type="term" value="C:cytoplasm"/>
    <property type="evidence" value="ECO:0007005"/>
    <property type="project" value="PomBase"/>
</dbReference>
<dbReference type="GO" id="GO:0061645">
    <property type="term" value="C:endocytic patch"/>
    <property type="evidence" value="ECO:0000314"/>
    <property type="project" value="PomBase"/>
</dbReference>
<dbReference type="GO" id="GO:0031097">
    <property type="term" value="C:medial cortex"/>
    <property type="evidence" value="ECO:0000314"/>
    <property type="project" value="PomBase"/>
</dbReference>
<dbReference type="GO" id="GO:0035841">
    <property type="term" value="C:new growing cell tip"/>
    <property type="evidence" value="ECO:0000314"/>
    <property type="project" value="PomBase"/>
</dbReference>
<dbReference type="GO" id="GO:0035840">
    <property type="term" value="C:old growing cell tip"/>
    <property type="evidence" value="ECO:0000314"/>
    <property type="project" value="PomBase"/>
</dbReference>
<dbReference type="GO" id="GO:0051015">
    <property type="term" value="F:actin filament binding"/>
    <property type="evidence" value="ECO:0000318"/>
    <property type="project" value="GO_Central"/>
</dbReference>
<dbReference type="GO" id="GO:0035615">
    <property type="term" value="F:clathrin adaptor activity"/>
    <property type="evidence" value="ECO:0000318"/>
    <property type="project" value="GO_Central"/>
</dbReference>
<dbReference type="GO" id="GO:0032051">
    <property type="term" value="F:clathrin light chain binding"/>
    <property type="evidence" value="ECO:0000318"/>
    <property type="project" value="GO_Central"/>
</dbReference>
<dbReference type="GO" id="GO:0106006">
    <property type="term" value="F:cytoskeletal protein-membrane anchor activity"/>
    <property type="evidence" value="ECO:0000269"/>
    <property type="project" value="PomBase"/>
</dbReference>
<dbReference type="GO" id="GO:0043325">
    <property type="term" value="F:phosphatidylinositol-3,4-bisphosphate binding"/>
    <property type="evidence" value="ECO:0000318"/>
    <property type="project" value="GO_Central"/>
</dbReference>
<dbReference type="GO" id="GO:0080025">
    <property type="term" value="F:phosphatidylinositol-3,5-bisphosphate binding"/>
    <property type="evidence" value="ECO:0000318"/>
    <property type="project" value="GO_Central"/>
</dbReference>
<dbReference type="GO" id="GO:0030036">
    <property type="term" value="P:actin cytoskeleton organization"/>
    <property type="evidence" value="ECO:0000315"/>
    <property type="project" value="PomBase"/>
</dbReference>
<dbReference type="GO" id="GO:0007015">
    <property type="term" value="P:actin filament organization"/>
    <property type="evidence" value="ECO:0000318"/>
    <property type="project" value="GO_Central"/>
</dbReference>
<dbReference type="GO" id="GO:0048268">
    <property type="term" value="P:clathrin coat assembly"/>
    <property type="evidence" value="ECO:0000318"/>
    <property type="project" value="GO_Central"/>
</dbReference>
<dbReference type="GO" id="GO:0006897">
    <property type="term" value="P:endocytosis"/>
    <property type="evidence" value="ECO:0000315"/>
    <property type="project" value="PomBase"/>
</dbReference>
<dbReference type="GO" id="GO:0030950">
    <property type="term" value="P:establishment or maintenance of actin cytoskeleton polarity"/>
    <property type="evidence" value="ECO:0000315"/>
    <property type="project" value="PomBase"/>
</dbReference>
<dbReference type="CDD" id="cd17007">
    <property type="entry name" value="ANTH_N_Sla2p"/>
    <property type="match status" value="1"/>
</dbReference>
<dbReference type="Gene3D" id="1.25.40.90">
    <property type="match status" value="1"/>
</dbReference>
<dbReference type="Gene3D" id="1.20.1410.10">
    <property type="entry name" value="I/LWEQ domain"/>
    <property type="match status" value="1"/>
</dbReference>
<dbReference type="InterPro" id="IPR011417">
    <property type="entry name" value="ANTH_dom"/>
</dbReference>
<dbReference type="InterPro" id="IPR013809">
    <property type="entry name" value="ENTH"/>
</dbReference>
<dbReference type="InterPro" id="IPR008942">
    <property type="entry name" value="ENTH_VHS"/>
</dbReference>
<dbReference type="InterPro" id="IPR035964">
    <property type="entry name" value="I/LWEQ_dom_sf"/>
</dbReference>
<dbReference type="InterPro" id="IPR002558">
    <property type="entry name" value="ILWEQ_dom"/>
</dbReference>
<dbReference type="InterPro" id="IPR030224">
    <property type="entry name" value="Sla2_fam"/>
</dbReference>
<dbReference type="PANTHER" id="PTHR10407">
    <property type="entry name" value="HUNTINGTIN INTERACTING PROTEIN 1"/>
    <property type="match status" value="1"/>
</dbReference>
<dbReference type="PANTHER" id="PTHR10407:SF15">
    <property type="entry name" value="HUNTINGTIN INTERACTING PROTEIN 1"/>
    <property type="match status" value="1"/>
</dbReference>
<dbReference type="Pfam" id="PF07651">
    <property type="entry name" value="ANTH"/>
    <property type="match status" value="1"/>
</dbReference>
<dbReference type="Pfam" id="PF01608">
    <property type="entry name" value="I_LWEQ"/>
    <property type="match status" value="1"/>
</dbReference>
<dbReference type="SMART" id="SM00273">
    <property type="entry name" value="ENTH"/>
    <property type="match status" value="1"/>
</dbReference>
<dbReference type="SMART" id="SM00307">
    <property type="entry name" value="ILWEQ"/>
    <property type="match status" value="1"/>
</dbReference>
<dbReference type="SUPFAM" id="SSF48464">
    <property type="entry name" value="ENTH/VHS domain"/>
    <property type="match status" value="1"/>
</dbReference>
<dbReference type="SUPFAM" id="SSF89009">
    <property type="entry name" value="GAT-like domain"/>
    <property type="match status" value="1"/>
</dbReference>
<dbReference type="SUPFAM" id="SSF109885">
    <property type="entry name" value="I/LWEQ domain"/>
    <property type="match status" value="1"/>
</dbReference>
<dbReference type="PROSITE" id="PS50942">
    <property type="entry name" value="ENTH"/>
    <property type="match status" value="1"/>
</dbReference>
<dbReference type="PROSITE" id="PS50945">
    <property type="entry name" value="I_LWEQ"/>
    <property type="match status" value="1"/>
</dbReference>
<evidence type="ECO:0000255" key="1"/>
<evidence type="ECO:0000255" key="2">
    <source>
        <dbReference type="PROSITE-ProRule" id="PRU00243"/>
    </source>
</evidence>
<evidence type="ECO:0000255" key="3">
    <source>
        <dbReference type="PROSITE-ProRule" id="PRU00292"/>
    </source>
</evidence>
<evidence type="ECO:0000256" key="4">
    <source>
        <dbReference type="SAM" id="MobiDB-lite"/>
    </source>
</evidence>
<evidence type="ECO:0000269" key="5">
    <source>
    </source>
</evidence>
<evidence type="ECO:0000269" key="6">
    <source>
    </source>
</evidence>
<evidence type="ECO:0000305" key="7"/>
<proteinExistence type="evidence at protein level"/>
<accession>Q9P6L5</accession>
<accession>P78916</accession>
<protein>
    <recommendedName>
        <fullName>Endocytosis protein end4</fullName>
    </recommendedName>
    <alternativeName>
        <fullName>SLA2 protein homolog</fullName>
    </alternativeName>
</protein>
<gene>
    <name type="primary">end4</name>
    <name type="synonym">sla2</name>
    <name type="ORF">SPAC688.11</name>
</gene>
<sequence>MSSFRLQSDHMQSDASLMTSVRKATSIDETAPKRKHVRSCIIFTWDHHTARPFWTAIKVQPLLANEVQTFKALITIHRVLQEGHKSALVDSQSEKGWLKTCERQYDGESSPKGYSDLIRDYVDYLLDKLSFHAQHPEFNGTFEYKEYISLRQVDDPNEGYETVYDMMNLQDHIDEFQKQLFSNFKRSNKNECRIAALVPLVQESYGIYRFLTSMLRALYSTVDAPETLEPLKHRYKSQHHRLRQFYADCSNLRYLTSLISVPRLPHDPPDLEGDDNIPDLPKRPASIAPQPTGASTIAPQPTGTSPSPPVEMNFPDTSDITPAYSEPEPIQDFWSDPTLDQQLAAQQAAQQAAQQQAELAAQQAAAQQAQLAAQQAAEMERQRMAAQQHQQALEAIQMAQAEQQRIAQEQLAQQQFQMQTQGQLAELEQQLLATRGQLEQSNVLLNQYDARVRTLENELSQAGVNLQEQIHQNDDLIESLKNQILTWKNKYEALAKLYTQLRQEHLDLLSKYKQIQLKASSAQEAIDKKEKMEREMKNKNLELADMILERDRARHELETMHRSQRDKQESTERELRLLQEKAASLERNKSSEVSNLLSRYNTEVAHLEDALHSKDRELANLGVELKSTENRYRQLLQEKEEELEIQKAAVDESLLQLSKLQLDRNDIDQAMDTQIDELLKSQLEKLDDIVDSVLATGIQRLDTSLYELDSPMHAGNQYATPEFILSTIENASNNATDFSTAFNNYFADGPNADHSEVINGVNLFSTAIYEVANNAKGLSRTTGDDQGSDRFVGLSRDLVNMAKRFLSSLFSVNTRKMDVNVKTDLVIGENIELQRYLQQLTQYSEKFLNKESENTVGLLNAPGENIEELVDNQLAETAQAIQQAILRLQNIAAKPKDDSLSPSELQVHDSLLSASIAITEAIARLIKAATASQAEIVAQGRGSSSRGAFYKKHNRWTEGLISAAKAVARATTTLIETADGVVNGTSSFEHLIVACNGVSAATAQLVAASRVKANFASKVQDHLEDAAKAVTEACKALVRQVESVALKAKEVQHEDFSSLGVHEYRRKEIEQQVQILKLENDLVAARRRLFDMRKTSYHVAEE</sequence>